<proteinExistence type="predicted"/>
<gene>
    <name type="ORF">UMAG_10309</name>
</gene>
<sequence>MILQPSSSKSKLTSHQDHHLVPHSISLRRLLSRLDKSELVSLVTRWLDNAGPSYIPPMLSRRQPKAGQEDSVTNLTLYHAILDLNEERRCRSMDELRLLWTGPMSDPRVPKARALDRISDVDWPEGLSYAMVAELDLFYAHARQLSKTWSTVKLEYDDDVDAAGRGWERLSETQIRLRLGNELGHYFEHHIYLHPRVKPEDRNAAAVRSWTDSFSYFRIVLAPIPSDVCGTGLHILHLPRTPFLLVSGSLGRGSENREMALSAFAAAAGATTVNYAKPAAGSAAAKKLLAELNDAGEDAAGNRRTLGELRGKDPLALREILLHESGRLSSTSDASAAPAGVAGGGKARQMQFSQGGSGQGAEDGPLIAPLKRRREEDLSLLGIRPPTPPASGSERDTVSLSSASTSARPTQRRSSLTPCSQTPQETHQHAREALTTRMESQREANELFGPKPNPYDPSNDALPRVERIEYELHLPFPAMQRYNTRSLIDMDAYNSDPEKPKIKLRLEGTHVLAGLRKLVAAGMDRSTSRLDAGEGQGDDDDEEDGQAEKYEGAVKPVKLDGLPGWLTEVRGTKVVVQPSPPGDDSSRDM</sequence>
<evidence type="ECO:0000256" key="1">
    <source>
        <dbReference type="SAM" id="MobiDB-lite"/>
    </source>
</evidence>
<dbReference type="EMBL" id="CM003145">
    <property type="protein sequence ID" value="KIS69331.1"/>
    <property type="molecule type" value="Genomic_DNA"/>
</dbReference>
<dbReference type="RefSeq" id="XP_011389191.1">
    <property type="nucleotide sequence ID" value="XM_011390889.1"/>
</dbReference>
<dbReference type="STRING" id="237631.P0CH66"/>
<dbReference type="EnsemblFungi" id="KIS69331">
    <property type="protein sequence ID" value="KIS69331"/>
    <property type="gene ID" value="UMAG_10309"/>
</dbReference>
<dbReference type="GeneID" id="23566356"/>
<dbReference type="KEGG" id="uma:UMAG_10309"/>
<dbReference type="VEuPathDB" id="FungiDB:UMAG_10309"/>
<dbReference type="eggNOG" id="KOG2786">
    <property type="taxonomic scope" value="Eukaryota"/>
</dbReference>
<dbReference type="InParanoid" id="P0CH66"/>
<dbReference type="OrthoDB" id="6585699at2759"/>
<dbReference type="Proteomes" id="UP000000561">
    <property type="component" value="Chromosome 6"/>
</dbReference>
<dbReference type="GO" id="GO:0034080">
    <property type="term" value="P:CENP-A containing chromatin assembly"/>
    <property type="evidence" value="ECO:0007669"/>
    <property type="project" value="InterPro"/>
</dbReference>
<dbReference type="GO" id="GO:0007059">
    <property type="term" value="P:chromosome segregation"/>
    <property type="evidence" value="ECO:0007669"/>
    <property type="project" value="InterPro"/>
</dbReference>
<dbReference type="InterPro" id="IPR007902">
    <property type="entry name" value="Chl4/mis15/CENP-N"/>
</dbReference>
<dbReference type="Pfam" id="PF05238">
    <property type="entry name" value="CENP-N"/>
    <property type="match status" value="1"/>
</dbReference>
<keyword id="KW-1185">Reference proteome</keyword>
<feature type="chain" id="PRO_0000398120" description="Putative uncharacterized protein UM10309">
    <location>
        <begin position="1"/>
        <end position="589"/>
    </location>
</feature>
<feature type="region of interest" description="Disordered" evidence="1">
    <location>
        <begin position="328"/>
        <end position="365"/>
    </location>
</feature>
<feature type="region of interest" description="Disordered" evidence="1">
    <location>
        <begin position="379"/>
        <end position="459"/>
    </location>
</feature>
<feature type="region of interest" description="Disordered" evidence="1">
    <location>
        <begin position="525"/>
        <end position="555"/>
    </location>
</feature>
<feature type="region of interest" description="Disordered" evidence="1">
    <location>
        <begin position="569"/>
        <end position="589"/>
    </location>
</feature>
<feature type="compositionally biased region" description="Polar residues" evidence="1">
    <location>
        <begin position="398"/>
        <end position="425"/>
    </location>
</feature>
<feature type="compositionally biased region" description="Basic and acidic residues" evidence="1">
    <location>
        <begin position="426"/>
        <end position="445"/>
    </location>
</feature>
<feature type="compositionally biased region" description="Acidic residues" evidence="1">
    <location>
        <begin position="536"/>
        <end position="545"/>
    </location>
</feature>
<organism>
    <name type="scientific">Mycosarcoma maydis</name>
    <name type="common">Corn smut fungus</name>
    <name type="synonym">Ustilago maydis</name>
    <dbReference type="NCBI Taxonomy" id="5270"/>
    <lineage>
        <taxon>Eukaryota</taxon>
        <taxon>Fungi</taxon>
        <taxon>Dikarya</taxon>
        <taxon>Basidiomycota</taxon>
        <taxon>Ustilaginomycotina</taxon>
        <taxon>Ustilaginomycetes</taxon>
        <taxon>Ustilaginales</taxon>
        <taxon>Ustilaginaceae</taxon>
        <taxon>Mycosarcoma</taxon>
    </lineage>
</organism>
<protein>
    <recommendedName>
        <fullName>Putative uncharacterized protein UM10309</fullName>
    </recommendedName>
</protein>
<accession>P0CH66</accession>
<accession>A0A0D1E0C7</accession>
<accession>Q4PB42</accession>
<name>YU309_MYCMD</name>
<reference key="1">
    <citation type="journal article" date="2006" name="Nature">
        <title>Insights from the genome of the biotrophic fungal plant pathogen Ustilago maydis.</title>
        <authorList>
            <person name="Kaemper J."/>
            <person name="Kahmann R."/>
            <person name="Boelker M."/>
            <person name="Ma L.-J."/>
            <person name="Brefort T."/>
            <person name="Saville B.J."/>
            <person name="Banuett F."/>
            <person name="Kronstad J.W."/>
            <person name="Gold S.E."/>
            <person name="Mueller O."/>
            <person name="Perlin M.H."/>
            <person name="Woesten H.A.B."/>
            <person name="de Vries R."/>
            <person name="Ruiz-Herrera J."/>
            <person name="Reynaga-Pena C.G."/>
            <person name="Snetselaar K."/>
            <person name="McCann M."/>
            <person name="Perez-Martin J."/>
            <person name="Feldbruegge M."/>
            <person name="Basse C.W."/>
            <person name="Steinberg G."/>
            <person name="Ibeas J.I."/>
            <person name="Holloman W."/>
            <person name="Guzman P."/>
            <person name="Farman M.L."/>
            <person name="Stajich J.E."/>
            <person name="Sentandreu R."/>
            <person name="Gonzalez-Prieto J.M."/>
            <person name="Kennell J.C."/>
            <person name="Molina L."/>
            <person name="Schirawski J."/>
            <person name="Mendoza-Mendoza A."/>
            <person name="Greilinger D."/>
            <person name="Muench K."/>
            <person name="Roessel N."/>
            <person name="Scherer M."/>
            <person name="Vranes M."/>
            <person name="Ladendorf O."/>
            <person name="Vincon V."/>
            <person name="Fuchs U."/>
            <person name="Sandrock B."/>
            <person name="Meng S."/>
            <person name="Ho E.C.H."/>
            <person name="Cahill M.J."/>
            <person name="Boyce K.J."/>
            <person name="Klose J."/>
            <person name="Klosterman S.J."/>
            <person name="Deelstra H.J."/>
            <person name="Ortiz-Castellanos L."/>
            <person name="Li W."/>
            <person name="Sanchez-Alonso P."/>
            <person name="Schreier P.H."/>
            <person name="Haeuser-Hahn I."/>
            <person name="Vaupel M."/>
            <person name="Koopmann E."/>
            <person name="Friedrich G."/>
            <person name="Voss H."/>
            <person name="Schlueter T."/>
            <person name="Margolis J."/>
            <person name="Platt D."/>
            <person name="Swimmer C."/>
            <person name="Gnirke A."/>
            <person name="Chen F."/>
            <person name="Vysotskaia V."/>
            <person name="Mannhaupt G."/>
            <person name="Gueldener U."/>
            <person name="Muensterkoetter M."/>
            <person name="Haase D."/>
            <person name="Oesterheld M."/>
            <person name="Mewes H.-W."/>
            <person name="Mauceli E.W."/>
            <person name="DeCaprio D."/>
            <person name="Wade C.M."/>
            <person name="Butler J."/>
            <person name="Young S.K."/>
            <person name="Jaffe D.B."/>
            <person name="Calvo S.E."/>
            <person name="Nusbaum C."/>
            <person name="Galagan J.E."/>
            <person name="Birren B.W."/>
        </authorList>
    </citation>
    <scope>NUCLEOTIDE SEQUENCE [LARGE SCALE GENOMIC DNA]</scope>
    <source>
        <strain>DSM 14603 / FGSC 9021 / UM521</strain>
    </source>
</reference>
<reference key="2">
    <citation type="submission" date="2014-09" db="EMBL/GenBank/DDBJ databases">
        <authorList>
            <person name="Gueldener U."/>
            <person name="Muensterkoetter M."/>
            <person name="Walter M.C."/>
            <person name="Mannhaupt G."/>
            <person name="Kahmann R."/>
        </authorList>
    </citation>
    <scope>GENOME REANNOTATION</scope>
    <source>
        <strain>DSM 14603 / FGSC 9021 / UM521</strain>
    </source>
</reference>